<organism>
    <name type="scientific">Corynebacterium kroppenstedtii (strain DSM 44385 / JCM 11950 / CIP 105744 / CCUG 35717)</name>
    <dbReference type="NCBI Taxonomy" id="645127"/>
    <lineage>
        <taxon>Bacteria</taxon>
        <taxon>Bacillati</taxon>
        <taxon>Actinomycetota</taxon>
        <taxon>Actinomycetes</taxon>
        <taxon>Mycobacteriales</taxon>
        <taxon>Corynebacteriaceae</taxon>
        <taxon>Corynebacterium</taxon>
    </lineage>
</organism>
<keyword id="KW-1017">Isopeptide bond</keyword>
<keyword id="KW-1185">Reference proteome</keyword>
<keyword id="KW-0833">Ubl conjugation pathway</keyword>
<accession>C4LIL0</accession>
<feature type="chain" id="PRO_0000390579" description="Prokaryotic ubiquitin-like protein Pup">
    <location>
        <begin position="1"/>
        <end position="62"/>
    </location>
</feature>
<feature type="region of interest" description="Disordered" evidence="2">
    <location>
        <begin position="1"/>
        <end position="36"/>
    </location>
</feature>
<feature type="region of interest" description="ARC ATPase binding" evidence="1">
    <location>
        <begin position="18"/>
        <end position="56"/>
    </location>
</feature>
<feature type="modified residue" description="Deamidated glutamine" evidence="1">
    <location>
        <position position="62"/>
    </location>
</feature>
<feature type="cross-link" description="Isoglutamyl lysine isopeptide (Gln-Lys) (interchain with K-? in acceptor proteins)" evidence="1">
    <location>
        <position position="62"/>
    </location>
</feature>
<reference key="1">
    <citation type="journal article" date="2008" name="J. Biotechnol.">
        <title>Ultrafast pyrosequencing of Corynebacterium kroppenstedtii DSM44385 revealed insights into the physiology of a lipophilic corynebacterium that lacks mycolic acids.</title>
        <authorList>
            <person name="Tauch A."/>
            <person name="Schneider J."/>
            <person name="Szczepanowski R."/>
            <person name="Tilker A."/>
            <person name="Viehoever P."/>
            <person name="Gartemann K.-H."/>
            <person name="Arnold W."/>
            <person name="Blom J."/>
            <person name="Brinkrolf K."/>
            <person name="Brune I."/>
            <person name="Goetker S."/>
            <person name="Weisshaar B."/>
            <person name="Goesmann A."/>
            <person name="Droege M."/>
            <person name="Puehler A."/>
        </authorList>
    </citation>
    <scope>NUCLEOTIDE SEQUENCE [LARGE SCALE GENOMIC DNA]</scope>
    <source>
        <strain>DSM 44385 / JCM 11950 / CIP 105744 / CCUG 35717</strain>
    </source>
</reference>
<dbReference type="EMBL" id="CP001620">
    <property type="protein sequence ID" value="ACR17665.1"/>
    <property type="molecule type" value="Genomic_DNA"/>
</dbReference>
<dbReference type="RefSeq" id="WP_012731552.1">
    <property type="nucleotide sequence ID" value="NC_012704.1"/>
</dbReference>
<dbReference type="SMR" id="C4LIL0"/>
<dbReference type="STRING" id="645127.ckrop_0911"/>
<dbReference type="KEGG" id="ckp:ckrop_0911"/>
<dbReference type="eggNOG" id="ENOG5033BS6">
    <property type="taxonomic scope" value="Bacteria"/>
</dbReference>
<dbReference type="HOGENOM" id="CLU_183816_1_0_11"/>
<dbReference type="OrthoDB" id="3254977at2"/>
<dbReference type="UniPathway" id="UPA00997"/>
<dbReference type="Proteomes" id="UP000001473">
    <property type="component" value="Chromosome"/>
</dbReference>
<dbReference type="GO" id="GO:0070628">
    <property type="term" value="F:proteasome binding"/>
    <property type="evidence" value="ECO:0007669"/>
    <property type="project" value="UniProtKB-UniRule"/>
</dbReference>
<dbReference type="GO" id="GO:0031386">
    <property type="term" value="F:protein tag activity"/>
    <property type="evidence" value="ECO:0007669"/>
    <property type="project" value="UniProtKB-UniRule"/>
</dbReference>
<dbReference type="GO" id="GO:0019941">
    <property type="term" value="P:modification-dependent protein catabolic process"/>
    <property type="evidence" value="ECO:0007669"/>
    <property type="project" value="UniProtKB-UniRule"/>
</dbReference>
<dbReference type="GO" id="GO:0010498">
    <property type="term" value="P:proteasomal protein catabolic process"/>
    <property type="evidence" value="ECO:0007669"/>
    <property type="project" value="UniProtKB-UniRule"/>
</dbReference>
<dbReference type="GO" id="GO:0070490">
    <property type="term" value="P:protein pupylation"/>
    <property type="evidence" value="ECO:0007669"/>
    <property type="project" value="UniProtKB-UniRule"/>
</dbReference>
<dbReference type="HAMAP" id="MF_02106">
    <property type="entry name" value="Pup"/>
    <property type="match status" value="1"/>
</dbReference>
<dbReference type="InterPro" id="IPR008515">
    <property type="entry name" value="Ubiquitin-like_Pup"/>
</dbReference>
<dbReference type="NCBIfam" id="TIGR03687">
    <property type="entry name" value="pupylate_cterm"/>
    <property type="match status" value="1"/>
</dbReference>
<dbReference type="Pfam" id="PF05639">
    <property type="entry name" value="Pup"/>
    <property type="match status" value="1"/>
</dbReference>
<sequence length="62" mass="6704">MEKSSQIHGSKPGDDNADEPENAAGQSQIRKQGADDLLDEIDGLLESNAEEFVRSYVQKGGQ</sequence>
<gene>
    <name evidence="1" type="primary">pup</name>
    <name type="ordered locus">ckrop_0911</name>
</gene>
<protein>
    <recommendedName>
        <fullName evidence="1">Prokaryotic ubiquitin-like protein Pup</fullName>
    </recommendedName>
    <alternativeName>
        <fullName evidence="1">Bacterial ubiquitin-like modifier</fullName>
    </alternativeName>
</protein>
<evidence type="ECO:0000255" key="1">
    <source>
        <dbReference type="HAMAP-Rule" id="MF_02106"/>
    </source>
</evidence>
<evidence type="ECO:0000256" key="2">
    <source>
        <dbReference type="SAM" id="MobiDB-lite"/>
    </source>
</evidence>
<proteinExistence type="inferred from homology"/>
<name>PUP_CORK4</name>
<comment type="function">
    <text evidence="1">Protein modifier that is covalently attached to lysine residues of substrate proteins, thereby targeting them for proteasomal degradation. The tagging system is termed pupylation.</text>
</comment>
<comment type="pathway">
    <text evidence="1">Protein degradation; proteasomal Pup-dependent pathway.</text>
</comment>
<comment type="subunit">
    <text evidence="1">Strongly interacts with the proteasome-associated ATPase ARC through a hydrophobic interface; the interacting region of Pup lies in its C-terminal half. There is one Pup binding site per ARC hexamer ring.</text>
</comment>
<comment type="domain">
    <text evidence="1">The N-terminal unstructured half of Pup provides a signal required to initiate unfolding and degradation by the proteasome but is not needed for pupylation, while the C-terminal helical half of Pup interacts with ARC to target proteins to the proteasome.</text>
</comment>
<comment type="PTM">
    <text evidence="1">Is modified by deamidation of its C-terminal glutamine to glutamate by the deamidase Dop, a prerequisite to the subsequent pupylation process.</text>
</comment>
<comment type="similarity">
    <text evidence="1">Belongs to the prokaryotic ubiquitin-like protein family.</text>
</comment>